<protein>
    <recommendedName>
        <fullName evidence="1">Segregation and condensation protein B</fullName>
    </recommendedName>
</protein>
<comment type="function">
    <text evidence="1">Participates in chromosomal partition during cell division. May act via the formation of a condensin-like complex containing Smc and ScpA that pull DNA away from mid-cell into both cell halves.</text>
</comment>
<comment type="subunit">
    <text evidence="1">Homodimer. Homodimerization may be required to stabilize the binding of ScpA to the Smc head domains. Component of a cohesin-like complex composed of ScpA, ScpB and the Smc homodimer, in which ScpA and ScpB bind to the head domain of Smc. The presence of the three proteins is required for the association of the complex with DNA.</text>
</comment>
<comment type="subcellular location">
    <subcellularLocation>
        <location evidence="1">Cytoplasm</location>
    </subcellularLocation>
    <text evidence="1">Associated with two foci at the outer edges of the nucleoid region in young cells, and at four foci within both cell halves in older cells.</text>
</comment>
<comment type="similarity">
    <text evidence="1">Belongs to the ScpB family.</text>
</comment>
<sequence length="179" mass="19904">MTYLSQLEALLFVAGEEGLSLRQLASLLELTPTALQQQLDKLSQKYKEDKESGLCLIESSRTYKLVTKECLAPLLKDYAKAPINQTLSRASLEVLSIVAYKQPITRIEIDEIRGVNSSGALSKLVAFGLVQEAGKKEVIGRPNLYATTDYFLDYMGINHLEELVDISSIAVEEQETTLF</sequence>
<evidence type="ECO:0000255" key="1">
    <source>
        <dbReference type="HAMAP-Rule" id="MF_01804"/>
    </source>
</evidence>
<keyword id="KW-0131">Cell cycle</keyword>
<keyword id="KW-0132">Cell division</keyword>
<keyword id="KW-0159">Chromosome partition</keyword>
<keyword id="KW-0963">Cytoplasm</keyword>
<dbReference type="EMBL" id="FM204883">
    <property type="protein sequence ID" value="CAW95030.1"/>
    <property type="molecule type" value="Genomic_DNA"/>
</dbReference>
<dbReference type="RefSeq" id="WP_012516228.1">
    <property type="nucleotide sequence ID" value="NC_012471.1"/>
</dbReference>
<dbReference type="SMR" id="C0M7Q4"/>
<dbReference type="KEGG" id="seu:SEQ_1862"/>
<dbReference type="HOGENOM" id="CLU_045647_5_3_9"/>
<dbReference type="OrthoDB" id="9806226at2"/>
<dbReference type="Proteomes" id="UP000001365">
    <property type="component" value="Chromosome"/>
</dbReference>
<dbReference type="GO" id="GO:0005737">
    <property type="term" value="C:cytoplasm"/>
    <property type="evidence" value="ECO:0007669"/>
    <property type="project" value="UniProtKB-SubCell"/>
</dbReference>
<dbReference type="GO" id="GO:0051301">
    <property type="term" value="P:cell division"/>
    <property type="evidence" value="ECO:0007669"/>
    <property type="project" value="UniProtKB-KW"/>
</dbReference>
<dbReference type="GO" id="GO:0051304">
    <property type="term" value="P:chromosome separation"/>
    <property type="evidence" value="ECO:0007669"/>
    <property type="project" value="InterPro"/>
</dbReference>
<dbReference type="GO" id="GO:0006260">
    <property type="term" value="P:DNA replication"/>
    <property type="evidence" value="ECO:0007669"/>
    <property type="project" value="UniProtKB-UniRule"/>
</dbReference>
<dbReference type="Gene3D" id="1.10.10.10">
    <property type="entry name" value="Winged helix-like DNA-binding domain superfamily/Winged helix DNA-binding domain"/>
    <property type="match status" value="2"/>
</dbReference>
<dbReference type="HAMAP" id="MF_01804">
    <property type="entry name" value="ScpB"/>
    <property type="match status" value="1"/>
</dbReference>
<dbReference type="InterPro" id="IPR005234">
    <property type="entry name" value="ScpB_csome_segregation"/>
</dbReference>
<dbReference type="InterPro" id="IPR036388">
    <property type="entry name" value="WH-like_DNA-bd_sf"/>
</dbReference>
<dbReference type="InterPro" id="IPR036390">
    <property type="entry name" value="WH_DNA-bd_sf"/>
</dbReference>
<dbReference type="NCBIfam" id="TIGR00281">
    <property type="entry name" value="SMC-Scp complex subunit ScpB"/>
    <property type="match status" value="1"/>
</dbReference>
<dbReference type="PANTHER" id="PTHR34298">
    <property type="entry name" value="SEGREGATION AND CONDENSATION PROTEIN B"/>
    <property type="match status" value="1"/>
</dbReference>
<dbReference type="PANTHER" id="PTHR34298:SF2">
    <property type="entry name" value="SEGREGATION AND CONDENSATION PROTEIN B"/>
    <property type="match status" value="1"/>
</dbReference>
<dbReference type="Pfam" id="PF04079">
    <property type="entry name" value="SMC_ScpB"/>
    <property type="match status" value="1"/>
</dbReference>
<dbReference type="PIRSF" id="PIRSF019345">
    <property type="entry name" value="ScpB"/>
    <property type="match status" value="1"/>
</dbReference>
<dbReference type="SUPFAM" id="SSF46785">
    <property type="entry name" value="Winged helix' DNA-binding domain"/>
    <property type="match status" value="2"/>
</dbReference>
<organism>
    <name type="scientific">Streptococcus equi subsp. equi (strain 4047)</name>
    <dbReference type="NCBI Taxonomy" id="553482"/>
    <lineage>
        <taxon>Bacteria</taxon>
        <taxon>Bacillati</taxon>
        <taxon>Bacillota</taxon>
        <taxon>Bacilli</taxon>
        <taxon>Lactobacillales</taxon>
        <taxon>Streptococcaceae</taxon>
        <taxon>Streptococcus</taxon>
    </lineage>
</organism>
<name>SCPB_STRE4</name>
<feature type="chain" id="PRO_1000187538" description="Segregation and condensation protein B">
    <location>
        <begin position="1"/>
        <end position="179"/>
    </location>
</feature>
<accession>C0M7Q4</accession>
<gene>
    <name evidence="1" type="primary">scpB</name>
    <name type="ordered locus">SEQ_1862</name>
</gene>
<proteinExistence type="inferred from homology"/>
<reference key="1">
    <citation type="journal article" date="2009" name="PLoS Pathog.">
        <title>Genomic evidence for the evolution of Streptococcus equi: host restriction, increased virulence, and genetic exchange with human pathogens.</title>
        <authorList>
            <person name="Holden M.T.G."/>
            <person name="Heather Z."/>
            <person name="Paillot R."/>
            <person name="Steward K.F."/>
            <person name="Webb K."/>
            <person name="Ainslie F."/>
            <person name="Jourdan T."/>
            <person name="Bason N.C."/>
            <person name="Holroyd N.E."/>
            <person name="Mungall K."/>
            <person name="Quail M.A."/>
            <person name="Sanders M."/>
            <person name="Simmonds M."/>
            <person name="Willey D."/>
            <person name="Brooks K."/>
            <person name="Aanensen D.M."/>
            <person name="Spratt B.G."/>
            <person name="Jolley K.A."/>
            <person name="Maiden M.C.J."/>
            <person name="Kehoe M."/>
            <person name="Chanter N."/>
            <person name="Bentley S.D."/>
            <person name="Robinson C."/>
            <person name="Maskell D.J."/>
            <person name="Parkhill J."/>
            <person name="Waller A.S."/>
        </authorList>
    </citation>
    <scope>NUCLEOTIDE SEQUENCE [LARGE SCALE GENOMIC DNA]</scope>
    <source>
        <strain>4047</strain>
    </source>
</reference>